<keyword id="KW-0378">Hydrolase</keyword>
<keyword id="KW-0460">Magnesium</keyword>
<keyword id="KW-0511">Multifunctional enzyme</keyword>
<keyword id="KW-0548">Nucleotidyltransferase</keyword>
<keyword id="KW-0677">Repeat</keyword>
<keyword id="KW-0808">Transferase</keyword>
<reference key="1">
    <citation type="submission" date="2008-08" db="EMBL/GenBank/DDBJ databases">
        <title>Complete sequence of Vibrio fischeri strain MJ11.</title>
        <authorList>
            <person name="Mandel M.J."/>
            <person name="Stabb E.V."/>
            <person name="Ruby E.G."/>
            <person name="Ferriera S."/>
            <person name="Johnson J."/>
            <person name="Kravitz S."/>
            <person name="Beeson K."/>
            <person name="Sutton G."/>
            <person name="Rogers Y.-H."/>
            <person name="Friedman R."/>
            <person name="Frazier M."/>
            <person name="Venter J.C."/>
        </authorList>
    </citation>
    <scope>NUCLEOTIDE SEQUENCE [LARGE SCALE GENOMIC DNA]</scope>
    <source>
        <strain>MJ11</strain>
    </source>
</reference>
<comment type="function">
    <text evidence="1">Modifies, by uridylylation and deuridylylation, the PII regulatory proteins (GlnB and homologs), in response to the nitrogen status of the cell that GlnD senses through the glutamine level. Under low glutamine levels, catalyzes the conversion of the PII proteins and UTP to PII-UMP and PPi, while under higher glutamine levels, GlnD hydrolyzes PII-UMP to PII and UMP (deuridylylation). Thus, controls uridylylation state and activity of the PII proteins, and plays an important role in the regulation of nitrogen assimilation and metabolism.</text>
</comment>
<comment type="catalytic activity">
    <reaction evidence="1">
        <text>[protein-PII]-L-tyrosine + UTP = [protein-PII]-uridylyl-L-tyrosine + diphosphate</text>
        <dbReference type="Rhea" id="RHEA:13673"/>
        <dbReference type="Rhea" id="RHEA-COMP:12147"/>
        <dbReference type="Rhea" id="RHEA-COMP:12148"/>
        <dbReference type="ChEBI" id="CHEBI:33019"/>
        <dbReference type="ChEBI" id="CHEBI:46398"/>
        <dbReference type="ChEBI" id="CHEBI:46858"/>
        <dbReference type="ChEBI" id="CHEBI:90602"/>
        <dbReference type="EC" id="2.7.7.59"/>
    </reaction>
</comment>
<comment type="catalytic activity">
    <reaction evidence="1">
        <text>[protein-PII]-uridylyl-L-tyrosine + H2O = [protein-PII]-L-tyrosine + UMP + H(+)</text>
        <dbReference type="Rhea" id="RHEA:48600"/>
        <dbReference type="Rhea" id="RHEA-COMP:12147"/>
        <dbReference type="Rhea" id="RHEA-COMP:12148"/>
        <dbReference type="ChEBI" id="CHEBI:15377"/>
        <dbReference type="ChEBI" id="CHEBI:15378"/>
        <dbReference type="ChEBI" id="CHEBI:46858"/>
        <dbReference type="ChEBI" id="CHEBI:57865"/>
        <dbReference type="ChEBI" id="CHEBI:90602"/>
    </reaction>
</comment>
<comment type="cofactor">
    <cofactor evidence="1">
        <name>Mg(2+)</name>
        <dbReference type="ChEBI" id="CHEBI:18420"/>
    </cofactor>
</comment>
<comment type="activity regulation">
    <text evidence="1">Uridylyltransferase (UTase) activity is inhibited by glutamine, while glutamine activates uridylyl-removing (UR) activity.</text>
</comment>
<comment type="domain">
    <text evidence="1">Has four distinct domains: an N-terminal nucleotidyltransferase (NT) domain responsible for UTase activity, a central HD domain that encodes UR activity, and two C-terminal ACT domains that seem to have a role in glutamine sensing.</text>
</comment>
<comment type="similarity">
    <text evidence="1">Belongs to the GlnD family.</text>
</comment>
<gene>
    <name evidence="1" type="primary">glnD</name>
    <name type="ordered locus">VFMJ11_2098</name>
</gene>
<protein>
    <recommendedName>
        <fullName evidence="1">Bifunctional uridylyltransferase/uridylyl-removing enzyme</fullName>
        <shortName evidence="1">UTase/UR</shortName>
    </recommendedName>
    <alternativeName>
        <fullName evidence="1">Bifunctional [protein-PII] modification enzyme</fullName>
    </alternativeName>
    <alternativeName>
        <fullName evidence="1">Bifunctional nitrogen sensor protein</fullName>
    </alternativeName>
    <domain>
        <recommendedName>
            <fullName evidence="1">[Protein-PII] uridylyltransferase</fullName>
            <shortName evidence="1">PII uridylyltransferase</shortName>
            <shortName evidence="1">UTase</shortName>
            <ecNumber evidence="1">2.7.7.59</ecNumber>
        </recommendedName>
    </domain>
    <domain>
        <recommendedName>
            <fullName evidence="1">[Protein-PII]-UMP uridylyl-removing enzyme</fullName>
            <shortName evidence="1">UR</shortName>
            <ecNumber evidence="1">3.1.4.-</ecNumber>
        </recommendedName>
    </domain>
</protein>
<sequence length="873" mass="100653">MKYLSPLSLSDTQLNITELKQQLTLFSQYQINAFHQHKAVSDLVFERSHYFDQLLSRLWQFFKFDDIANTSLIAVGGYGRSELHPLSDIDILILTENNTNDTFCQKVGELVTLLWDLKLEIGHSVRSIAECIEIGQNDLTVATNLQEARYICGNKELSHQLKLKIHSDSFWPSESFYQAKIDEQKKRHSRYHDTTYNLEPDIKSSPGGLRDIHTLSWIARRHFGATSLLEMSQAGFLTDAEYRELLECQEFLWRVRFALHIELKRYDNRLTFGHQASVAEHLGFIGEGNRGVERMMKEFYRTLRRVAELNSMLLKIFDQAILHQGEQDDAIIIDDDFQRRGRLIEARKPALFQARPDTILDMFLLMANDSTIDGVAPPTMRQLRTARRRLNRFLCEIPEAKEKFLQLTQHPNALNNAFSSMHKLGVLSAYLPQWSHIVGQMQFDLFHAYTVDEHSIRLLKHINKFSDTTNRDKHPICCEIFPKIMKKELLIIAAIFHDIAKGRGGDHSELGAVDAYDFCISHGLSKPEANLVSWLVKSHLLMSVTAQRRDIYDPDVITEFAKQVRDEERLDYLVCLTVADICATNPDLWNSWKRSLIADLYNATQRALRRGLENPPDLRDRIRHNQQMASAQLRSEGFTQWEVDALWRRFKADYFLRHTHKQIAWHASHLLRHQDKEKSLILISKNASRGGTEIFVYSKDQPHLFATVAAELDRRSITIYDAQVMSSKDGYALDTFMVLDQNDDPIDEERQQRLIDQLYDVKLNDQATHIKTRRPPRQLQHFNVKTRMEFLPTKTGKRTLMEFVALDTPGLLATVGATFAQLGINLHAAKITTIGERAEDLFILTSDVGGRLDDDKQAELEIALVKNVARLSS</sequence>
<organism>
    <name type="scientific">Aliivibrio fischeri (strain MJ11)</name>
    <name type="common">Vibrio fischeri</name>
    <dbReference type="NCBI Taxonomy" id="388396"/>
    <lineage>
        <taxon>Bacteria</taxon>
        <taxon>Pseudomonadati</taxon>
        <taxon>Pseudomonadota</taxon>
        <taxon>Gammaproteobacteria</taxon>
        <taxon>Vibrionales</taxon>
        <taxon>Vibrionaceae</taxon>
        <taxon>Aliivibrio</taxon>
    </lineage>
</organism>
<proteinExistence type="inferred from homology"/>
<dbReference type="EC" id="2.7.7.59" evidence="1"/>
<dbReference type="EC" id="3.1.4.-" evidence="1"/>
<dbReference type="EMBL" id="CP001139">
    <property type="protein sequence ID" value="ACH66318.1"/>
    <property type="molecule type" value="Genomic_DNA"/>
</dbReference>
<dbReference type="RefSeq" id="WP_012533646.1">
    <property type="nucleotide sequence ID" value="NC_011184.1"/>
</dbReference>
<dbReference type="SMR" id="B5F9X8"/>
<dbReference type="KEGG" id="vfm:VFMJ11_2098"/>
<dbReference type="HOGENOM" id="CLU_012833_0_0_6"/>
<dbReference type="Proteomes" id="UP000001857">
    <property type="component" value="Chromosome I"/>
</dbReference>
<dbReference type="GO" id="GO:0008773">
    <property type="term" value="F:[protein-PII] uridylyltransferase activity"/>
    <property type="evidence" value="ECO:0007669"/>
    <property type="project" value="UniProtKB-UniRule"/>
</dbReference>
<dbReference type="GO" id="GO:0008081">
    <property type="term" value="F:phosphoric diester hydrolase activity"/>
    <property type="evidence" value="ECO:0007669"/>
    <property type="project" value="UniProtKB-UniRule"/>
</dbReference>
<dbReference type="GO" id="GO:0006808">
    <property type="term" value="P:regulation of nitrogen utilization"/>
    <property type="evidence" value="ECO:0007669"/>
    <property type="project" value="UniProtKB-UniRule"/>
</dbReference>
<dbReference type="CDD" id="cd04899">
    <property type="entry name" value="ACT_ACR-UUR-like_2"/>
    <property type="match status" value="1"/>
</dbReference>
<dbReference type="CDD" id="cd04900">
    <property type="entry name" value="ACT_UUR-like_1"/>
    <property type="match status" value="1"/>
</dbReference>
<dbReference type="CDD" id="cd00077">
    <property type="entry name" value="HDc"/>
    <property type="match status" value="1"/>
</dbReference>
<dbReference type="CDD" id="cd05401">
    <property type="entry name" value="NT_GlnE_GlnD_like"/>
    <property type="match status" value="1"/>
</dbReference>
<dbReference type="Gene3D" id="1.10.3210.10">
    <property type="entry name" value="Hypothetical protein af1432"/>
    <property type="match status" value="1"/>
</dbReference>
<dbReference type="HAMAP" id="MF_00277">
    <property type="entry name" value="PII_uridylyl_transf"/>
    <property type="match status" value="1"/>
</dbReference>
<dbReference type="InterPro" id="IPR045865">
    <property type="entry name" value="ACT-like_dom_sf"/>
</dbReference>
<dbReference type="InterPro" id="IPR002912">
    <property type="entry name" value="ACT_dom"/>
</dbReference>
<dbReference type="InterPro" id="IPR003607">
    <property type="entry name" value="HD/PDEase_dom"/>
</dbReference>
<dbReference type="InterPro" id="IPR006674">
    <property type="entry name" value="HD_domain"/>
</dbReference>
<dbReference type="InterPro" id="IPR043519">
    <property type="entry name" value="NT_sf"/>
</dbReference>
<dbReference type="InterPro" id="IPR013546">
    <property type="entry name" value="PII_UdlTrfase/GS_AdlTrfase"/>
</dbReference>
<dbReference type="InterPro" id="IPR002934">
    <property type="entry name" value="Polymerase_NTP_transf_dom"/>
</dbReference>
<dbReference type="InterPro" id="IPR010043">
    <property type="entry name" value="UTase/UR"/>
</dbReference>
<dbReference type="NCBIfam" id="NF002487">
    <property type="entry name" value="PRK01759.1"/>
    <property type="match status" value="1"/>
</dbReference>
<dbReference type="NCBIfam" id="NF003448">
    <property type="entry name" value="PRK05007.1"/>
    <property type="match status" value="1"/>
</dbReference>
<dbReference type="NCBIfam" id="TIGR01693">
    <property type="entry name" value="UTase_glnD"/>
    <property type="match status" value="1"/>
</dbReference>
<dbReference type="PANTHER" id="PTHR47320">
    <property type="entry name" value="BIFUNCTIONAL URIDYLYLTRANSFERASE/URIDYLYL-REMOVING ENZYME"/>
    <property type="match status" value="1"/>
</dbReference>
<dbReference type="PANTHER" id="PTHR47320:SF1">
    <property type="entry name" value="BIFUNCTIONAL URIDYLYLTRANSFERASE_URIDYLYL-REMOVING ENZYME"/>
    <property type="match status" value="1"/>
</dbReference>
<dbReference type="Pfam" id="PF01842">
    <property type="entry name" value="ACT"/>
    <property type="match status" value="1"/>
</dbReference>
<dbReference type="Pfam" id="PF08335">
    <property type="entry name" value="GlnD_UR_UTase"/>
    <property type="match status" value="1"/>
</dbReference>
<dbReference type="Pfam" id="PF01966">
    <property type="entry name" value="HD"/>
    <property type="match status" value="1"/>
</dbReference>
<dbReference type="Pfam" id="PF01909">
    <property type="entry name" value="NTP_transf_2"/>
    <property type="match status" value="1"/>
</dbReference>
<dbReference type="PIRSF" id="PIRSF006288">
    <property type="entry name" value="PII_uridyltransf"/>
    <property type="match status" value="1"/>
</dbReference>
<dbReference type="SMART" id="SM00471">
    <property type="entry name" value="HDc"/>
    <property type="match status" value="1"/>
</dbReference>
<dbReference type="SUPFAM" id="SSF55021">
    <property type="entry name" value="ACT-like"/>
    <property type="match status" value="2"/>
</dbReference>
<dbReference type="SUPFAM" id="SSF109604">
    <property type="entry name" value="HD-domain/PDEase-like"/>
    <property type="match status" value="1"/>
</dbReference>
<dbReference type="SUPFAM" id="SSF81301">
    <property type="entry name" value="Nucleotidyltransferase"/>
    <property type="match status" value="1"/>
</dbReference>
<dbReference type="SUPFAM" id="SSF81593">
    <property type="entry name" value="Nucleotidyltransferase substrate binding subunit/domain"/>
    <property type="match status" value="1"/>
</dbReference>
<dbReference type="PROSITE" id="PS51671">
    <property type="entry name" value="ACT"/>
    <property type="match status" value="2"/>
</dbReference>
<dbReference type="PROSITE" id="PS51831">
    <property type="entry name" value="HD"/>
    <property type="match status" value="1"/>
</dbReference>
<accession>B5F9X8</accession>
<name>GLND_ALIFM</name>
<feature type="chain" id="PRO_1000114768" description="Bifunctional uridylyltransferase/uridylyl-removing enzyme">
    <location>
        <begin position="1"/>
        <end position="873"/>
    </location>
</feature>
<feature type="domain" description="HD" evidence="2">
    <location>
        <begin position="451"/>
        <end position="573"/>
    </location>
</feature>
<feature type="domain" description="ACT 1" evidence="1">
    <location>
        <begin position="693"/>
        <end position="777"/>
    </location>
</feature>
<feature type="domain" description="ACT 2" evidence="1">
    <location>
        <begin position="800"/>
        <end position="873"/>
    </location>
</feature>
<feature type="region of interest" description="Uridylyltransferase">
    <location>
        <begin position="1"/>
        <end position="332"/>
    </location>
</feature>
<feature type="region of interest" description="Uridylyl-removing">
    <location>
        <begin position="333"/>
        <end position="692"/>
    </location>
</feature>
<evidence type="ECO:0000255" key="1">
    <source>
        <dbReference type="HAMAP-Rule" id="MF_00277"/>
    </source>
</evidence>
<evidence type="ECO:0000255" key="2">
    <source>
        <dbReference type="PROSITE-ProRule" id="PRU01175"/>
    </source>
</evidence>